<accession>B5R6T2</accession>
<protein>
    <recommendedName>
        <fullName evidence="1">2-aminoethylphosphonate--pyruvate transaminase</fullName>
        <ecNumber evidence="1">2.6.1.37</ecNumber>
    </recommendedName>
    <alternativeName>
        <fullName evidence="1">2-aminoethylphosphonate aminotransferase</fullName>
    </alternativeName>
    <alternativeName>
        <fullName evidence="1">AEP transaminase</fullName>
        <shortName evidence="1">AEPT</shortName>
    </alternativeName>
</protein>
<organism>
    <name type="scientific">Salmonella gallinarum (strain 287/91 / NCTC 13346)</name>
    <dbReference type="NCBI Taxonomy" id="550538"/>
    <lineage>
        <taxon>Bacteria</taxon>
        <taxon>Pseudomonadati</taxon>
        <taxon>Pseudomonadota</taxon>
        <taxon>Gammaproteobacteria</taxon>
        <taxon>Enterobacterales</taxon>
        <taxon>Enterobacteriaceae</taxon>
        <taxon>Salmonella</taxon>
    </lineage>
</organism>
<evidence type="ECO:0000255" key="1">
    <source>
        <dbReference type="HAMAP-Rule" id="MF_01376"/>
    </source>
</evidence>
<keyword id="KW-0032">Aminotransferase</keyword>
<keyword id="KW-0663">Pyridoxal phosphate</keyword>
<keyword id="KW-0670">Pyruvate</keyword>
<keyword id="KW-0808">Transferase</keyword>
<name>PHNW_SALG2</name>
<gene>
    <name evidence="1" type="primary">phnW</name>
    <name type="ordered locus">SG0442</name>
</gene>
<reference key="1">
    <citation type="journal article" date="2008" name="Genome Res.">
        <title>Comparative genome analysis of Salmonella enteritidis PT4 and Salmonella gallinarum 287/91 provides insights into evolutionary and host adaptation pathways.</title>
        <authorList>
            <person name="Thomson N.R."/>
            <person name="Clayton D.J."/>
            <person name="Windhorst D."/>
            <person name="Vernikos G."/>
            <person name="Davidson S."/>
            <person name="Churcher C."/>
            <person name="Quail M.A."/>
            <person name="Stevens M."/>
            <person name="Jones M.A."/>
            <person name="Watson M."/>
            <person name="Barron A."/>
            <person name="Layton A."/>
            <person name="Pickard D."/>
            <person name="Kingsley R.A."/>
            <person name="Bignell A."/>
            <person name="Clark L."/>
            <person name="Harris B."/>
            <person name="Ormond D."/>
            <person name="Abdellah Z."/>
            <person name="Brooks K."/>
            <person name="Cherevach I."/>
            <person name="Chillingworth T."/>
            <person name="Woodward J."/>
            <person name="Norberczak H."/>
            <person name="Lord A."/>
            <person name="Arrowsmith C."/>
            <person name="Jagels K."/>
            <person name="Moule S."/>
            <person name="Mungall K."/>
            <person name="Saunders M."/>
            <person name="Whitehead S."/>
            <person name="Chabalgoity J.A."/>
            <person name="Maskell D."/>
            <person name="Humphreys T."/>
            <person name="Roberts M."/>
            <person name="Barrow P.A."/>
            <person name="Dougan G."/>
            <person name="Parkhill J."/>
        </authorList>
    </citation>
    <scope>NUCLEOTIDE SEQUENCE [LARGE SCALE GENOMIC DNA]</scope>
    <source>
        <strain>287/91 / NCTC 13346</strain>
    </source>
</reference>
<proteinExistence type="inferred from homology"/>
<sequence>MTSRNYLLLTPGPLTTSRTVKEAMLFDSCTWDDDYNIGVVEQIRQQLTEMATASEGYTSVLLQGSGSYAVEAVLGSALGPQDKVLIVSNGAYGARMVEMAGLMGIAHHAYDCGEVARPDVQAIDAILNADPTISHIAMVHSETTTGMLNPIDEVGTLAHRYGKTYIVDAMSSFGGIPMDIAALHIDYLISSANKCIQGVPGFAFVIAREQKLAACKGRSRSLSLDLYAQWRCMEDNHGKWRFTSPTHTVLAFAQALKELAKEGGVAARHQRYQQNQRSLVAGMRALGFNTLLDDELHSPIITAFYSPEDPQYRFSEFYRRLKEQGFVIYPGKVSQSDCFRIGNIGEVYAADITALLTAIRTAMYWTK</sequence>
<dbReference type="EC" id="2.6.1.37" evidence="1"/>
<dbReference type="EMBL" id="AM933173">
    <property type="protein sequence ID" value="CAR36341.1"/>
    <property type="molecule type" value="Genomic_DNA"/>
</dbReference>
<dbReference type="RefSeq" id="WP_000203976.1">
    <property type="nucleotide sequence ID" value="NC_011274.1"/>
</dbReference>
<dbReference type="SMR" id="B5R6T2"/>
<dbReference type="KEGG" id="seg:SG0442"/>
<dbReference type="HOGENOM" id="CLU_027686_3_1_6"/>
<dbReference type="Proteomes" id="UP000008321">
    <property type="component" value="Chromosome"/>
</dbReference>
<dbReference type="GO" id="GO:0047304">
    <property type="term" value="F:2-aminoethylphosphonate-pyruvate transaminase activity"/>
    <property type="evidence" value="ECO:0007669"/>
    <property type="project" value="UniProtKB-UniRule"/>
</dbReference>
<dbReference type="GO" id="GO:0019700">
    <property type="term" value="P:organic phosphonate catabolic process"/>
    <property type="evidence" value="ECO:0007669"/>
    <property type="project" value="InterPro"/>
</dbReference>
<dbReference type="Gene3D" id="3.90.1150.10">
    <property type="entry name" value="Aspartate Aminotransferase, domain 1"/>
    <property type="match status" value="1"/>
</dbReference>
<dbReference type="Gene3D" id="3.40.640.10">
    <property type="entry name" value="Type I PLP-dependent aspartate aminotransferase-like (Major domain)"/>
    <property type="match status" value="1"/>
</dbReference>
<dbReference type="HAMAP" id="MF_01376">
    <property type="entry name" value="PhnW_aminotrans_5"/>
    <property type="match status" value="1"/>
</dbReference>
<dbReference type="InterPro" id="IPR000192">
    <property type="entry name" value="Aminotrans_V_dom"/>
</dbReference>
<dbReference type="InterPro" id="IPR012703">
    <property type="entry name" value="NH2EtPonate_pyrv_transaminase"/>
</dbReference>
<dbReference type="InterPro" id="IPR015424">
    <property type="entry name" value="PyrdxlP-dep_Trfase"/>
</dbReference>
<dbReference type="InterPro" id="IPR015421">
    <property type="entry name" value="PyrdxlP-dep_Trfase_major"/>
</dbReference>
<dbReference type="InterPro" id="IPR015422">
    <property type="entry name" value="PyrdxlP-dep_Trfase_small"/>
</dbReference>
<dbReference type="InterPro" id="IPR024169">
    <property type="entry name" value="SP_NH2Trfase/AEP_transaminase"/>
</dbReference>
<dbReference type="NCBIfam" id="TIGR03301">
    <property type="entry name" value="PhnW-AepZ"/>
    <property type="match status" value="1"/>
</dbReference>
<dbReference type="NCBIfam" id="NF010006">
    <property type="entry name" value="PRK13479.1"/>
    <property type="match status" value="1"/>
</dbReference>
<dbReference type="NCBIfam" id="TIGR02326">
    <property type="entry name" value="transamin_PhnW"/>
    <property type="match status" value="1"/>
</dbReference>
<dbReference type="PANTHER" id="PTHR42778">
    <property type="entry name" value="2-AMINOETHYLPHOSPHONATE--PYRUVATE TRANSAMINASE"/>
    <property type="match status" value="1"/>
</dbReference>
<dbReference type="PANTHER" id="PTHR42778:SF1">
    <property type="entry name" value="2-AMINOETHYLPHOSPHONATE--PYRUVATE TRANSAMINASE"/>
    <property type="match status" value="1"/>
</dbReference>
<dbReference type="Pfam" id="PF00266">
    <property type="entry name" value="Aminotran_5"/>
    <property type="match status" value="1"/>
</dbReference>
<dbReference type="PIRSF" id="PIRSF000524">
    <property type="entry name" value="SPT"/>
    <property type="match status" value="1"/>
</dbReference>
<dbReference type="SUPFAM" id="SSF53383">
    <property type="entry name" value="PLP-dependent transferases"/>
    <property type="match status" value="1"/>
</dbReference>
<comment type="function">
    <text evidence="1">Involved in phosphonate degradation.</text>
</comment>
<comment type="catalytic activity">
    <reaction evidence="1">
        <text>(2-aminoethyl)phosphonate + pyruvate = phosphonoacetaldehyde + L-alanine</text>
        <dbReference type="Rhea" id="RHEA:17021"/>
        <dbReference type="ChEBI" id="CHEBI:15361"/>
        <dbReference type="ChEBI" id="CHEBI:57418"/>
        <dbReference type="ChEBI" id="CHEBI:57972"/>
        <dbReference type="ChEBI" id="CHEBI:58383"/>
        <dbReference type="EC" id="2.6.1.37"/>
    </reaction>
</comment>
<comment type="cofactor">
    <cofactor evidence="1">
        <name>pyridoxal 5'-phosphate</name>
        <dbReference type="ChEBI" id="CHEBI:597326"/>
    </cofactor>
</comment>
<comment type="subunit">
    <text evidence="1">Homodimer.</text>
</comment>
<comment type="similarity">
    <text evidence="1">Belongs to the class-V pyridoxal-phosphate-dependent aminotransferase family. PhnW subfamily.</text>
</comment>
<feature type="chain" id="PRO_1000144857" description="2-aminoethylphosphonate--pyruvate transaminase">
    <location>
        <begin position="1"/>
        <end position="367"/>
    </location>
</feature>
<feature type="modified residue" description="N6-(pyridoxal phosphate)lysine" evidence="1">
    <location>
        <position position="194"/>
    </location>
</feature>